<protein>
    <recommendedName>
        <fullName evidence="4">Violacein synthase</fullName>
        <ecNumber evidence="2 3">1.14.13.224</ecNumber>
    </recommendedName>
</protein>
<name>VIOC_CHRVO</name>
<evidence type="ECO:0000255" key="1"/>
<evidence type="ECO:0000269" key="2">
    <source>
    </source>
</evidence>
<evidence type="ECO:0000269" key="3">
    <source>
    </source>
</evidence>
<evidence type="ECO:0000305" key="4"/>
<dbReference type="EC" id="1.14.13.224" evidence="2 3"/>
<dbReference type="EMBL" id="AF172851">
    <property type="protein sequence ID" value="AAD51810.1"/>
    <property type="molecule type" value="Genomic_DNA"/>
</dbReference>
<dbReference type="EMBL" id="AB032799">
    <property type="protein sequence ID" value="BAA84784.1"/>
    <property type="molecule type" value="Genomic_DNA"/>
</dbReference>
<dbReference type="EMBL" id="AE016825">
    <property type="protein sequence ID" value="AAQ60936.1"/>
    <property type="molecule type" value="Genomic_DNA"/>
</dbReference>
<dbReference type="RefSeq" id="WP_011136819.1">
    <property type="nucleotide sequence ID" value="NC_005085.1"/>
</dbReference>
<dbReference type="SMR" id="Q9S3U9"/>
<dbReference type="STRING" id="243365.CV_3272"/>
<dbReference type="GeneID" id="66364494"/>
<dbReference type="KEGG" id="cvi:CV_3272"/>
<dbReference type="eggNOG" id="COG0654">
    <property type="taxonomic scope" value="Bacteria"/>
</dbReference>
<dbReference type="HOGENOM" id="CLU_023210_0_1_4"/>
<dbReference type="OrthoDB" id="5487740at2"/>
<dbReference type="BioCyc" id="MetaCyc:MONOMER-17365"/>
<dbReference type="BRENDA" id="1.14.13.224">
    <property type="organism ID" value="1370"/>
</dbReference>
<dbReference type="UniPathway" id="UPA00309"/>
<dbReference type="Proteomes" id="UP000001424">
    <property type="component" value="Chromosome"/>
</dbReference>
<dbReference type="GO" id="GO:0071949">
    <property type="term" value="F:FAD binding"/>
    <property type="evidence" value="ECO:0007669"/>
    <property type="project" value="InterPro"/>
</dbReference>
<dbReference type="GO" id="GO:0004502">
    <property type="term" value="F:kynurenine 3-monooxygenase activity"/>
    <property type="evidence" value="ECO:0007669"/>
    <property type="project" value="TreeGrafter"/>
</dbReference>
<dbReference type="GO" id="GO:0017000">
    <property type="term" value="P:antibiotic biosynthetic process"/>
    <property type="evidence" value="ECO:0007669"/>
    <property type="project" value="UniProtKB-KW"/>
</dbReference>
<dbReference type="GO" id="GO:0070189">
    <property type="term" value="P:kynurenine metabolic process"/>
    <property type="evidence" value="ECO:0007669"/>
    <property type="project" value="TreeGrafter"/>
</dbReference>
<dbReference type="Gene3D" id="3.50.50.60">
    <property type="entry name" value="FAD/NAD(P)-binding domain"/>
    <property type="match status" value="1"/>
</dbReference>
<dbReference type="InterPro" id="IPR029058">
    <property type="entry name" value="AB_hydrolase_fold"/>
</dbReference>
<dbReference type="InterPro" id="IPR002938">
    <property type="entry name" value="FAD-bd"/>
</dbReference>
<dbReference type="InterPro" id="IPR036188">
    <property type="entry name" value="FAD/NAD-bd_sf"/>
</dbReference>
<dbReference type="PANTHER" id="PTHR46028">
    <property type="entry name" value="KYNURENINE 3-MONOOXYGENASE"/>
    <property type="match status" value="1"/>
</dbReference>
<dbReference type="PANTHER" id="PTHR46028:SF2">
    <property type="entry name" value="KYNURENINE 3-MONOOXYGENASE"/>
    <property type="match status" value="1"/>
</dbReference>
<dbReference type="Pfam" id="PF01494">
    <property type="entry name" value="FAD_binding_3"/>
    <property type="match status" value="1"/>
</dbReference>
<dbReference type="PRINTS" id="PR00420">
    <property type="entry name" value="RNGMNOXGNASE"/>
</dbReference>
<dbReference type="SUPFAM" id="SSF53474">
    <property type="entry name" value="alpha/beta-Hydrolases"/>
    <property type="match status" value="1"/>
</dbReference>
<dbReference type="SUPFAM" id="SSF51905">
    <property type="entry name" value="FAD/NAD(P)-binding domain"/>
    <property type="match status" value="1"/>
</dbReference>
<feature type="chain" id="PRO_0000065833" description="Violacein synthase">
    <location>
        <begin position="1"/>
        <end position="429"/>
    </location>
</feature>
<feature type="binding site" evidence="1">
    <location>
        <begin position="3"/>
        <end position="21"/>
    </location>
    <ligand>
        <name>FAD</name>
        <dbReference type="ChEBI" id="CHEBI:57692"/>
    </ligand>
</feature>
<feature type="sequence conflict" description="In Ref. 1; AAD51810." evidence="4" ref="1">
    <original>R</original>
    <variation>Q</variation>
    <location>
        <position position="38"/>
    </location>
</feature>
<organism>
    <name type="scientific">Chromobacterium violaceum (strain ATCC 12472 / DSM 30191 / JCM 1249 / CCUG 213 / NBRC 12614 / NCIMB 9131 / NCTC 9757 / MK)</name>
    <dbReference type="NCBI Taxonomy" id="243365"/>
    <lineage>
        <taxon>Bacteria</taxon>
        <taxon>Pseudomonadati</taxon>
        <taxon>Pseudomonadota</taxon>
        <taxon>Betaproteobacteria</taxon>
        <taxon>Neisseriales</taxon>
        <taxon>Chromobacteriaceae</taxon>
        <taxon>Chromobacterium</taxon>
    </lineage>
</organism>
<proteinExistence type="evidence at protein level"/>
<comment type="function">
    <text evidence="2 3">Catalyzes the hydroxylation of the 16-position of protoviolaceinate and protodeoxyviolaceinate to form violacein and deoxyviolacein, respectively.</text>
</comment>
<comment type="catalytic activity">
    <reaction evidence="2 3">
        <text>protoviolaceinate + NADPH + O2 + H(+) = violaceinate + NADP(+) + H2O</text>
        <dbReference type="Rhea" id="RHEA:49120"/>
        <dbReference type="ChEBI" id="CHEBI:15377"/>
        <dbReference type="ChEBI" id="CHEBI:15378"/>
        <dbReference type="ChEBI" id="CHEBI:15379"/>
        <dbReference type="ChEBI" id="CHEBI:57783"/>
        <dbReference type="ChEBI" id="CHEBI:58349"/>
        <dbReference type="ChEBI" id="CHEBI:90898"/>
        <dbReference type="ChEBI" id="CHEBI:90900"/>
        <dbReference type="EC" id="1.14.13.224"/>
    </reaction>
</comment>
<comment type="catalytic activity">
    <reaction evidence="2 3">
        <text>protoviolaceinate + NADH + O2 + H(+) = violaceinate + NAD(+) + H2O</text>
        <dbReference type="Rhea" id="RHEA:49652"/>
        <dbReference type="ChEBI" id="CHEBI:15377"/>
        <dbReference type="ChEBI" id="CHEBI:15378"/>
        <dbReference type="ChEBI" id="CHEBI:15379"/>
        <dbReference type="ChEBI" id="CHEBI:57540"/>
        <dbReference type="ChEBI" id="CHEBI:57945"/>
        <dbReference type="ChEBI" id="CHEBI:90898"/>
        <dbReference type="ChEBI" id="CHEBI:90900"/>
        <dbReference type="EC" id="1.14.13.224"/>
    </reaction>
</comment>
<comment type="catalytic activity">
    <reaction evidence="2 3">
        <text>protodeoxyviolaceinate + NADPH + O2 + H(+) = deoxyviolaceinate + NADP(+) + H2O</text>
        <dbReference type="Rhea" id="RHEA:49116"/>
        <dbReference type="ChEBI" id="CHEBI:15377"/>
        <dbReference type="ChEBI" id="CHEBI:15378"/>
        <dbReference type="ChEBI" id="CHEBI:15379"/>
        <dbReference type="ChEBI" id="CHEBI:57783"/>
        <dbReference type="ChEBI" id="CHEBI:58349"/>
        <dbReference type="ChEBI" id="CHEBI:90907"/>
        <dbReference type="ChEBI" id="CHEBI:90910"/>
        <dbReference type="EC" id="1.14.13.224"/>
    </reaction>
</comment>
<comment type="catalytic activity">
    <reaction evidence="2 3">
        <text>protodeoxyviolaceinate + NADH + O2 + H(+) = deoxyviolaceinate + NAD(+) + H2O</text>
        <dbReference type="Rhea" id="RHEA:49668"/>
        <dbReference type="ChEBI" id="CHEBI:15377"/>
        <dbReference type="ChEBI" id="CHEBI:15378"/>
        <dbReference type="ChEBI" id="CHEBI:15379"/>
        <dbReference type="ChEBI" id="CHEBI:57540"/>
        <dbReference type="ChEBI" id="CHEBI:57945"/>
        <dbReference type="ChEBI" id="CHEBI:90907"/>
        <dbReference type="ChEBI" id="CHEBI:90910"/>
        <dbReference type="EC" id="1.14.13.224"/>
    </reaction>
</comment>
<comment type="cofactor">
    <cofactor evidence="4">
        <name>FAD</name>
        <dbReference type="ChEBI" id="CHEBI:57692"/>
    </cofactor>
</comment>
<comment type="pathway">
    <text>Pigment biosynthesis; violacein biosynthesis.</text>
</comment>
<comment type="induction">
    <text>By N-acylhomoserine lactone (AHL).</text>
</comment>
<comment type="biotechnology">
    <text>Violacein production is used as a biosensor for the detection of quorum-sensing AHL production. Violacein possesses antibacterial, antiviral, antimicrobial, antileishmanial, trypanocidal and potential antitumoral activities.</text>
</comment>
<gene>
    <name type="primary">vioC</name>
    <name type="ordered locus">CV_3272</name>
</gene>
<keyword id="KW-0045">Antibiotic biosynthesis</keyword>
<keyword id="KW-0274">FAD</keyword>
<keyword id="KW-0285">Flavoprotein</keyword>
<keyword id="KW-0503">Monooxygenase</keyword>
<keyword id="KW-0520">NAD</keyword>
<keyword id="KW-0521">NADP</keyword>
<keyword id="KW-0560">Oxidoreductase</keyword>
<keyword id="KW-1185">Reference proteome</keyword>
<reference key="1">
    <citation type="journal article" date="2000" name="J. Mol. Microbiol. Biotechnol.">
        <title>Sequence analysis and functional characterization of the violacein biosynthetic pathway from Chromobacterium violaceum.</title>
        <authorList>
            <person name="August P.R."/>
            <person name="Grossman T.H."/>
            <person name="Minor C."/>
            <person name="Draper M.P."/>
            <person name="MacNeil I.A."/>
            <person name="Pemberton J.M."/>
            <person name="Call K.M."/>
            <person name="Holt D."/>
            <person name="Osburne M.S."/>
        </authorList>
    </citation>
    <scope>NUCLEOTIDE SEQUENCE [GENOMIC DNA]</scope>
    <source>
        <strain>UQM51</strain>
    </source>
</reference>
<reference key="2">
    <citation type="submission" date="1999-09" db="EMBL/GenBank/DDBJ databases">
        <title>Biosynthetic gene cluster for violacein pigment.</title>
        <authorList>
            <person name="Hoshino T."/>
        </authorList>
    </citation>
    <scope>NUCLEOTIDE SEQUENCE [GENOMIC DNA]</scope>
    <source>
        <strain>ATCC 12472 / DSM 30191 / JCM 1249 / CCUG 213 / NBRC 12614 / NCIMB 9131 / NCTC 9757 / MK</strain>
    </source>
</reference>
<reference key="3">
    <citation type="journal article" date="2003" name="Proc. Natl. Acad. Sci. U.S.A.">
        <title>The complete genome sequence of Chromobacterium violaceum reveals remarkable and exploitable bacterial adaptability.</title>
        <authorList>
            <person name="Vasconcelos A.T.R."/>
            <person name="de Almeida D.F."/>
            <person name="Hungria M."/>
            <person name="Guimaraes C.T."/>
            <person name="Antonio R.V."/>
            <person name="Almeida F.C."/>
            <person name="de Almeida L.G.P."/>
            <person name="de Almeida R."/>
            <person name="Alves-Gomes J.A."/>
            <person name="Andrade E.M."/>
            <person name="Araripe J."/>
            <person name="de Araujo M.F.F."/>
            <person name="Astolfi-Filho S."/>
            <person name="Azevedo V."/>
            <person name="Baptista A.J."/>
            <person name="Bataus L.A.M."/>
            <person name="Batista J.S."/>
            <person name="Belo A."/>
            <person name="van den Berg C."/>
            <person name="Bogo M."/>
            <person name="Bonatto S."/>
            <person name="Bordignon J."/>
            <person name="Brigido M.M."/>
            <person name="Brito C.A."/>
            <person name="Brocchi M."/>
            <person name="Burity H.A."/>
            <person name="Camargo A.A."/>
            <person name="Cardoso D.D.P."/>
            <person name="Carneiro N.P."/>
            <person name="Carraro D.M."/>
            <person name="Carvalho C.M.B."/>
            <person name="Cascardo J.C.M."/>
            <person name="Cavada B.S."/>
            <person name="Chueire L.M.O."/>
            <person name="Creczynski-Pasa T.B."/>
            <person name="Cunha-Junior N.C."/>
            <person name="Fagundes N."/>
            <person name="Falcao C.L."/>
            <person name="Fantinatti F."/>
            <person name="Farias I.P."/>
            <person name="Felipe M.S.S."/>
            <person name="Ferrari L.P."/>
            <person name="Ferro J.A."/>
            <person name="Ferro M.I.T."/>
            <person name="Franco G.R."/>
            <person name="Freitas N.S.A."/>
            <person name="Furlan L.R."/>
            <person name="Gazzinelli R.T."/>
            <person name="Gomes E.A."/>
            <person name="Goncalves P.R."/>
            <person name="Grangeiro T.B."/>
            <person name="Grattapaglia D."/>
            <person name="Grisard E.C."/>
            <person name="Hanna E.S."/>
            <person name="Jardim S.N."/>
            <person name="Laurino J."/>
            <person name="Leoi L.C.T."/>
            <person name="Lima L.F.A."/>
            <person name="Loureiro M.F."/>
            <person name="Lyra M.C.C.P."/>
            <person name="Madeira H.M.F."/>
            <person name="Manfio G.P."/>
            <person name="Maranhao A.Q."/>
            <person name="Martins W.S."/>
            <person name="di Mauro S.M.Z."/>
            <person name="de Medeiros S.R.B."/>
            <person name="Meissner R.V."/>
            <person name="Moreira M.A.M."/>
            <person name="Nascimento F.F."/>
            <person name="Nicolas M.F."/>
            <person name="Oliveira J.G."/>
            <person name="Oliveira S.C."/>
            <person name="Paixao R.F.C."/>
            <person name="Parente J.A."/>
            <person name="Pedrosa F.O."/>
            <person name="Pena S.D.J."/>
            <person name="Pereira J.O."/>
            <person name="Pereira M."/>
            <person name="Pinto L.S.R.C."/>
            <person name="Pinto L.S."/>
            <person name="Porto J.I.R."/>
            <person name="Potrich D.P."/>
            <person name="Ramalho-Neto C.E."/>
            <person name="Reis A.M.M."/>
            <person name="Rigo L.U."/>
            <person name="Rondinelli E."/>
            <person name="Santos E.B.P."/>
            <person name="Santos F.R."/>
            <person name="Schneider M.P.C."/>
            <person name="Seuanez H.N."/>
            <person name="Silva A.M.R."/>
            <person name="da Silva A.L.C."/>
            <person name="Silva D.W."/>
            <person name="Silva R."/>
            <person name="Simoes I.C."/>
            <person name="Simon D."/>
            <person name="Soares C.M.A."/>
            <person name="Soares R.B.A."/>
            <person name="Souza E.M."/>
            <person name="Souza K.R.L."/>
            <person name="Souza R.C."/>
            <person name="Steffens M.B.R."/>
            <person name="Steindel M."/>
            <person name="Teixeira S.R."/>
            <person name="Urmenyi T."/>
            <person name="Vettore A."/>
            <person name="Wassem R."/>
            <person name="Zaha A."/>
            <person name="Simpson A.J.G."/>
        </authorList>
    </citation>
    <scope>NUCLEOTIDE SEQUENCE [LARGE SCALE GENOMIC DNA]</scope>
    <source>
        <strain>ATCC 12472 / DSM 30191 / JCM 1249 / CCUG 213 / NBRC 12614 / NCIMB 9131 / NCTC 9757 / MK</strain>
    </source>
</reference>
<reference key="4">
    <citation type="journal article" date="2006" name="Biochemistry">
        <title>In vitro biosynthesis of violacein from L-tryptophan by the enzymes VioA-E from Chromobacterium violaceum.</title>
        <authorList>
            <person name="Balibar C.J."/>
            <person name="Walsh C.T."/>
        </authorList>
    </citation>
    <scope>FUNCTION</scope>
    <scope>CATALYTIC ACTIVITY</scope>
    <source>
        <strain>ATCC 12472 / DSM 30191 / JCM 1249 / CCUG 213 / NBRC 12614 / NCIMB 9131 / NCTC 9757 / MK</strain>
    </source>
</reference>
<reference key="5">
    <citation type="journal article" date="2007" name="Chem. Commun. (Camb.)">
        <title>Biosynthesis of violacein: a genuine intermediate, protoviolaceinic acid, produced by VioABDE, and insight into VioC function.</title>
        <authorList>
            <person name="Shinoda K."/>
            <person name="Hasegawa T."/>
            <person name="Sato H."/>
            <person name="Shinozaki M."/>
            <person name="Kuramoto H."/>
            <person name="Takamiya Y."/>
            <person name="Sato T."/>
            <person name="Nikaidou N."/>
            <person name="Watanabe T."/>
            <person name="Hoshino T."/>
        </authorList>
    </citation>
    <scope>FUNCTION</scope>
    <scope>CATALYTIC ACTIVITY</scope>
    <source>
        <strain>ATCC 12472 / DSM 30191 / JCM 1249 / CCUG 213 / NBRC 12614 / NCIMB 9131 / NCTC 9757 / MK</strain>
    </source>
</reference>
<sequence>MKRAIIVGGGLAGGLTAIYLAKRGYEVHVVEKRGDPLRDLSSYVDVVSSRAIGVSMTVRGIKSVLAAGIPRAELDACGEPIVAMAFSVGGQYRMRELKPLEDFRPLSLNRAAFQKLLNKYANLAGVRYYFEHKCLDVDLDGKSVLIQGKDGQPQRLQGDMIIGADGAHSAVRQAMQSGLRRFEFQQTFFRHGYKTLVLPDAQALGYRKDTLYFFGMDSGGLFAGRAATIPDGSVSIAVCLPYSGSPSLTTTDEPTMRAFFDRYFGGLPRDARDEMLRQFLAKPSNDLINVRSSTFHYKGNVLLLGDAAHATAPFLGQGMNMALEDARTFVELLDRHQGDQDKAFPEFTELRKVQADAMQDMARANYDVLSCSNPIFFMRARYTRYMHSKFPGLYPPDMAEKLYFTSEPYDRLQQIQRKQNVWYKIGRVN</sequence>
<accession>Q9S3U9</accession>
<accession>Q9S0N3</accession>